<accession>Q5K473</accession>
<accession>A9JNT1</accession>
<feature type="chain" id="PRO_0000343358" description="Myohemerythrin">
    <location>
        <begin position="1"/>
        <end position="120"/>
    </location>
</feature>
<feature type="binding site" evidence="2">
    <location>
        <position position="26"/>
    </location>
    <ligand>
        <name>Fe cation</name>
        <dbReference type="ChEBI" id="CHEBI:24875"/>
        <label>1</label>
    </ligand>
</feature>
<feature type="binding site" evidence="2">
    <location>
        <position position="56"/>
    </location>
    <ligand>
        <name>Fe cation</name>
        <dbReference type="ChEBI" id="CHEBI:24875"/>
        <label>1</label>
    </ligand>
</feature>
<feature type="binding site" evidence="2">
    <location>
        <position position="60"/>
    </location>
    <ligand>
        <name>Fe cation</name>
        <dbReference type="ChEBI" id="CHEBI:24875"/>
        <label>1</label>
    </ligand>
</feature>
<feature type="binding site" evidence="2">
    <location>
        <position position="60"/>
    </location>
    <ligand>
        <name>Fe cation</name>
        <dbReference type="ChEBI" id="CHEBI:24875"/>
        <label>2</label>
    </ligand>
</feature>
<feature type="binding site" evidence="2">
    <location>
        <position position="75"/>
    </location>
    <ligand>
        <name>Fe cation</name>
        <dbReference type="ChEBI" id="CHEBI:24875"/>
        <label>2</label>
    </ligand>
</feature>
<feature type="binding site" evidence="2">
    <location>
        <position position="79"/>
    </location>
    <ligand>
        <name>Fe cation</name>
        <dbReference type="ChEBI" id="CHEBI:24875"/>
        <label>2</label>
    </ligand>
</feature>
<feature type="binding site" evidence="2">
    <location>
        <position position="108"/>
    </location>
    <ligand>
        <name>Fe cation</name>
        <dbReference type="ChEBI" id="CHEBI:24875"/>
        <label>2</label>
    </ligand>
</feature>
<feature type="binding site" evidence="2">
    <location>
        <position position="113"/>
    </location>
    <ligand>
        <name>Fe cation</name>
        <dbReference type="ChEBI" id="CHEBI:24875"/>
        <label>1</label>
    </ligand>
</feature>
<feature type="binding site" evidence="2">
    <location>
        <position position="113"/>
    </location>
    <ligand>
        <name>Fe cation</name>
        <dbReference type="ChEBI" id="CHEBI:24875"/>
        <label>2</label>
    </ligand>
</feature>
<feature type="sequence conflict" description="In Ref. 2; CAP08292." evidence="3" ref="2">
    <original>K</original>
    <variation>E</variation>
    <location>
        <position position="25"/>
    </location>
</feature>
<organism>
    <name type="scientific">Sipunculus nudus</name>
    <name type="common">Sipunculan worm</name>
    <dbReference type="NCBI Taxonomy" id="6446"/>
    <lineage>
        <taxon>Eukaryota</taxon>
        <taxon>Metazoa</taxon>
        <taxon>Spiralia</taxon>
        <taxon>Lophotrochozoa</taxon>
        <taxon>Annelida</taxon>
        <taxon>Sipuncula</taxon>
        <taxon>Sipunculidea</taxon>
        <taxon>Golfingiida</taxon>
        <taxon>Sipunculidae</taxon>
        <taxon>Sipunculus</taxon>
    </lineage>
</organism>
<reference key="1">
    <citation type="submission" date="2004-03" db="EMBL/GenBank/DDBJ databases">
        <title>Molecular evolution and phylogeny of Sipuculans hemerythrins.</title>
        <authorList>
            <person name="Vanin S."/>
            <person name="Negrisolo E."/>
            <person name="Bailly X."/>
            <person name="Bubacco L."/>
            <person name="Beltramini M."/>
            <person name="Salvato B."/>
        </authorList>
    </citation>
    <scope>NUCLEOTIDE SEQUENCE [MRNA] OF 2-120</scope>
</reference>
<reference key="2">
    <citation type="submission" date="2007-09" db="EMBL/GenBank/DDBJ databases">
        <title>Are hemerythrins relics of evolution? A limited distribution in genomes from the three kingdoms of life.</title>
        <authorList>
            <person name="Bailly X."/>
            <person name="Vanin S."/>
            <person name="Chabasse C."/>
            <person name="Mizuguchi K."/>
            <person name="Vinogradov S."/>
        </authorList>
    </citation>
    <scope>NUCLEOTIDE SEQUENCE [GENOMIC DNA] OF 2-120</scope>
</reference>
<protein>
    <recommendedName>
        <fullName>Myohemerythrin</fullName>
        <shortName>MHr</shortName>
        <shortName>myoHr</shortName>
    </recommendedName>
</protein>
<sequence>MGFPIPDPYVWDESFKVFYQLLDDKHKQIFQGVFDCAKDPSSAAKLQKLIEVTAKHFSDEENMMQQSKYSGYPPHKKAHEEFLGKLRGLRAPLDTAGLDYCKDWLVQHIKTIDFKYKGKL</sequence>
<keyword id="KW-0408">Iron</keyword>
<keyword id="KW-0479">Metal-binding</keyword>
<keyword id="KW-0514">Muscle protein</keyword>
<keyword id="KW-0561">Oxygen transport</keyword>
<keyword id="KW-0813">Transport</keyword>
<dbReference type="EMBL" id="AJ632198">
    <property type="protein sequence ID" value="CAG14944.1"/>
    <property type="molecule type" value="mRNA"/>
</dbReference>
<dbReference type="EMBL" id="AM886445">
    <property type="protein sequence ID" value="CAP08292.1"/>
    <property type="molecule type" value="Genomic_DNA"/>
</dbReference>
<dbReference type="SMR" id="Q5K473"/>
<dbReference type="GO" id="GO:0005506">
    <property type="term" value="F:iron ion binding"/>
    <property type="evidence" value="ECO:0007669"/>
    <property type="project" value="InterPro"/>
</dbReference>
<dbReference type="GO" id="GO:0005344">
    <property type="term" value="F:oxygen carrier activity"/>
    <property type="evidence" value="ECO:0007669"/>
    <property type="project" value="UniProtKB-KW"/>
</dbReference>
<dbReference type="CDD" id="cd12107">
    <property type="entry name" value="Hemerythrin"/>
    <property type="match status" value="1"/>
</dbReference>
<dbReference type="Gene3D" id="1.20.120.50">
    <property type="entry name" value="Hemerythrin-like"/>
    <property type="match status" value="1"/>
</dbReference>
<dbReference type="InterPro" id="IPR002063">
    <property type="entry name" value="Haemerythrin"/>
</dbReference>
<dbReference type="InterPro" id="IPR016131">
    <property type="entry name" value="Haemerythrin_Fe_BS"/>
</dbReference>
<dbReference type="InterPro" id="IPR050669">
    <property type="entry name" value="Hemerythrin"/>
</dbReference>
<dbReference type="InterPro" id="IPR012312">
    <property type="entry name" value="Hemerythrin-like"/>
</dbReference>
<dbReference type="InterPro" id="IPR035938">
    <property type="entry name" value="Hemerythrin-like_sf"/>
</dbReference>
<dbReference type="InterPro" id="IPR012827">
    <property type="entry name" value="Hemerythrin_metal-bd"/>
</dbReference>
<dbReference type="NCBIfam" id="TIGR02481">
    <property type="entry name" value="hemeryth_dom"/>
    <property type="match status" value="1"/>
</dbReference>
<dbReference type="NCBIfam" id="TIGR00058">
    <property type="entry name" value="Hemerythrin"/>
    <property type="match status" value="1"/>
</dbReference>
<dbReference type="PANTHER" id="PTHR37164">
    <property type="entry name" value="BACTERIOHEMERYTHRIN"/>
    <property type="match status" value="1"/>
</dbReference>
<dbReference type="PANTHER" id="PTHR37164:SF1">
    <property type="entry name" value="BACTERIOHEMERYTHRIN"/>
    <property type="match status" value="1"/>
</dbReference>
<dbReference type="Pfam" id="PF01814">
    <property type="entry name" value="Hemerythrin"/>
    <property type="match status" value="1"/>
</dbReference>
<dbReference type="PIRSF" id="PIRSF002033">
    <property type="entry name" value="Hemerythrin"/>
    <property type="match status" value="1"/>
</dbReference>
<dbReference type="PRINTS" id="PR00186">
    <property type="entry name" value="HEMERYTHRIN"/>
</dbReference>
<dbReference type="SUPFAM" id="SSF47188">
    <property type="entry name" value="Hemerythrin-like"/>
    <property type="match status" value="1"/>
</dbReference>
<dbReference type="PROSITE" id="PS00550">
    <property type="entry name" value="HEMERYTHRINS"/>
    <property type="match status" value="1"/>
</dbReference>
<name>HEMTM_SIPNU</name>
<comment type="function">
    <text evidence="1">Myohemerythrin is an oxygen-binding protein found in the retractor muscles of certain worms. The oxygen-binding site contains two iron atoms (By similarity).</text>
</comment>
<comment type="similarity">
    <text evidence="3">Belongs to the hemerythrin family.</text>
</comment>
<evidence type="ECO:0000250" key="1"/>
<evidence type="ECO:0000250" key="2">
    <source>
        <dbReference type="UniProtKB" id="P02244"/>
    </source>
</evidence>
<evidence type="ECO:0000305" key="3"/>
<proteinExistence type="evidence at transcript level"/>